<sequence length="101" mass="11260">MTKSELIARLAERYPQLVAKDADYAVKTILDAMSDALATGQRIEIRGFGSFALNSRPPRIGRNPKSGDKVMVPEKRVPHFKPGKQLRERVDAMVGQPIIED</sequence>
<evidence type="ECO:0000255" key="1">
    <source>
        <dbReference type="HAMAP-Rule" id="MF_00381"/>
    </source>
</evidence>
<protein>
    <recommendedName>
        <fullName evidence="1">Integration host factor subunit beta</fullName>
        <shortName evidence="1">IHF-beta</shortName>
    </recommendedName>
</protein>
<organism>
    <name type="scientific">Herminiimonas arsenicoxydans</name>
    <dbReference type="NCBI Taxonomy" id="204773"/>
    <lineage>
        <taxon>Bacteria</taxon>
        <taxon>Pseudomonadati</taxon>
        <taxon>Pseudomonadota</taxon>
        <taxon>Betaproteobacteria</taxon>
        <taxon>Burkholderiales</taxon>
        <taxon>Oxalobacteraceae</taxon>
        <taxon>Herminiimonas</taxon>
    </lineage>
</organism>
<keyword id="KW-0233">DNA recombination</keyword>
<keyword id="KW-0238">DNA-binding</keyword>
<keyword id="KW-1185">Reference proteome</keyword>
<keyword id="KW-0804">Transcription</keyword>
<keyword id="KW-0805">Transcription regulation</keyword>
<keyword id="KW-0810">Translation regulation</keyword>
<accession>A4G858</accession>
<reference key="1">
    <citation type="journal article" date="2007" name="PLoS Genet.">
        <title>A tale of two oxidation states: bacterial colonization of arsenic-rich environments.</title>
        <authorList>
            <person name="Muller D."/>
            <person name="Medigue C."/>
            <person name="Koechler S."/>
            <person name="Barbe V."/>
            <person name="Barakat M."/>
            <person name="Talla E."/>
            <person name="Bonnefoy V."/>
            <person name="Krin E."/>
            <person name="Arsene-Ploetze F."/>
            <person name="Carapito C."/>
            <person name="Chandler M."/>
            <person name="Cournoyer B."/>
            <person name="Cruveiller S."/>
            <person name="Dossat C."/>
            <person name="Duval S."/>
            <person name="Heymann M."/>
            <person name="Leize E."/>
            <person name="Lieutaud A."/>
            <person name="Lievremont D."/>
            <person name="Makita Y."/>
            <person name="Mangenot S."/>
            <person name="Nitschke W."/>
            <person name="Ortet P."/>
            <person name="Perdrial N."/>
            <person name="Schoepp B."/>
            <person name="Siguier P."/>
            <person name="Simeonova D.D."/>
            <person name="Rouy Z."/>
            <person name="Segurens B."/>
            <person name="Turlin E."/>
            <person name="Vallenet D."/>
            <person name="van Dorsselaer A."/>
            <person name="Weiss S."/>
            <person name="Weissenbach J."/>
            <person name="Lett M.-C."/>
            <person name="Danchin A."/>
            <person name="Bertin P.N."/>
        </authorList>
    </citation>
    <scope>NUCLEOTIDE SEQUENCE [LARGE SCALE GENOMIC DNA]</scope>
    <source>
        <strain>ULPAs1</strain>
    </source>
</reference>
<dbReference type="EMBL" id="CU207211">
    <property type="protein sequence ID" value="CAL62695.1"/>
    <property type="molecule type" value="Genomic_DNA"/>
</dbReference>
<dbReference type="SMR" id="A4G858"/>
<dbReference type="STRING" id="204773.HEAR2573"/>
<dbReference type="KEGG" id="har:HEAR2573"/>
<dbReference type="eggNOG" id="COG0776">
    <property type="taxonomic scope" value="Bacteria"/>
</dbReference>
<dbReference type="HOGENOM" id="CLU_105066_2_0_4"/>
<dbReference type="OrthoDB" id="9804203at2"/>
<dbReference type="Proteomes" id="UP000006697">
    <property type="component" value="Chromosome"/>
</dbReference>
<dbReference type="GO" id="GO:0005694">
    <property type="term" value="C:chromosome"/>
    <property type="evidence" value="ECO:0007669"/>
    <property type="project" value="InterPro"/>
</dbReference>
<dbReference type="GO" id="GO:0005829">
    <property type="term" value="C:cytosol"/>
    <property type="evidence" value="ECO:0007669"/>
    <property type="project" value="TreeGrafter"/>
</dbReference>
<dbReference type="GO" id="GO:0003677">
    <property type="term" value="F:DNA binding"/>
    <property type="evidence" value="ECO:0007669"/>
    <property type="project" value="UniProtKB-UniRule"/>
</dbReference>
<dbReference type="GO" id="GO:0030527">
    <property type="term" value="F:structural constituent of chromatin"/>
    <property type="evidence" value="ECO:0007669"/>
    <property type="project" value="InterPro"/>
</dbReference>
<dbReference type="GO" id="GO:0006310">
    <property type="term" value="P:DNA recombination"/>
    <property type="evidence" value="ECO:0007669"/>
    <property type="project" value="UniProtKB-UniRule"/>
</dbReference>
<dbReference type="GO" id="GO:0006355">
    <property type="term" value="P:regulation of DNA-templated transcription"/>
    <property type="evidence" value="ECO:0007669"/>
    <property type="project" value="UniProtKB-UniRule"/>
</dbReference>
<dbReference type="GO" id="GO:0006417">
    <property type="term" value="P:regulation of translation"/>
    <property type="evidence" value="ECO:0007669"/>
    <property type="project" value="UniProtKB-UniRule"/>
</dbReference>
<dbReference type="CDD" id="cd13836">
    <property type="entry name" value="IHF_B"/>
    <property type="match status" value="1"/>
</dbReference>
<dbReference type="Gene3D" id="4.10.520.10">
    <property type="entry name" value="IHF-like DNA-binding proteins"/>
    <property type="match status" value="1"/>
</dbReference>
<dbReference type="HAMAP" id="MF_00381">
    <property type="entry name" value="IHF_beta"/>
    <property type="match status" value="1"/>
</dbReference>
<dbReference type="InterPro" id="IPR000119">
    <property type="entry name" value="Hist_DNA-bd"/>
</dbReference>
<dbReference type="InterPro" id="IPR010992">
    <property type="entry name" value="IHF-like_DNA-bd_dom_sf"/>
</dbReference>
<dbReference type="InterPro" id="IPR005685">
    <property type="entry name" value="IHF_beta"/>
</dbReference>
<dbReference type="NCBIfam" id="TIGR00988">
    <property type="entry name" value="hip"/>
    <property type="match status" value="1"/>
</dbReference>
<dbReference type="NCBIfam" id="NF001222">
    <property type="entry name" value="PRK00199.1"/>
    <property type="match status" value="1"/>
</dbReference>
<dbReference type="PANTHER" id="PTHR33175">
    <property type="entry name" value="DNA-BINDING PROTEIN HU"/>
    <property type="match status" value="1"/>
</dbReference>
<dbReference type="PANTHER" id="PTHR33175:SF5">
    <property type="entry name" value="INTEGRATION HOST FACTOR SUBUNIT BETA"/>
    <property type="match status" value="1"/>
</dbReference>
<dbReference type="Pfam" id="PF00216">
    <property type="entry name" value="Bac_DNA_binding"/>
    <property type="match status" value="1"/>
</dbReference>
<dbReference type="PRINTS" id="PR01727">
    <property type="entry name" value="DNABINDINGHU"/>
</dbReference>
<dbReference type="SMART" id="SM00411">
    <property type="entry name" value="BHL"/>
    <property type="match status" value="1"/>
</dbReference>
<dbReference type="SUPFAM" id="SSF47729">
    <property type="entry name" value="IHF-like DNA-binding proteins"/>
    <property type="match status" value="1"/>
</dbReference>
<gene>
    <name evidence="1" type="primary">ihfB</name>
    <name evidence="1" type="synonym">himD</name>
    <name type="ordered locus">HEAR2573</name>
</gene>
<proteinExistence type="inferred from homology"/>
<feature type="chain" id="PRO_1000060611" description="Integration host factor subunit beta">
    <location>
        <begin position="1"/>
        <end position="101"/>
    </location>
</feature>
<name>IHFB_HERAR</name>
<comment type="function">
    <text evidence="1">This protein is one of the two subunits of integration host factor, a specific DNA-binding protein that functions in genetic recombination as well as in transcriptional and translational control.</text>
</comment>
<comment type="subunit">
    <text evidence="1">Heterodimer of an alpha and a beta chain.</text>
</comment>
<comment type="similarity">
    <text evidence="1">Belongs to the bacterial histone-like protein family.</text>
</comment>